<keyword id="KW-1003">Cell membrane</keyword>
<keyword id="KW-0406">Ion transport</keyword>
<keyword id="KW-0472">Membrane</keyword>
<keyword id="KW-1185">Reference proteome</keyword>
<keyword id="KW-0812">Transmembrane</keyword>
<keyword id="KW-1133">Transmembrane helix</keyword>
<keyword id="KW-0813">Transport</keyword>
<keyword id="KW-0862">Zinc</keyword>
<keyword id="KW-0864">Zinc transport</keyword>
<accession>P96119</accession>
<accession>O83198</accession>
<proteinExistence type="inferred from homology"/>
<feature type="chain" id="PRO_0000171155" description="Zinc transport system membrane protein TroD">
    <location>
        <begin position="1"/>
        <end position="367"/>
    </location>
</feature>
<feature type="transmembrane region" description="Helical" evidence="1">
    <location>
        <begin position="5"/>
        <end position="25"/>
    </location>
</feature>
<feature type="transmembrane region" description="Helical" evidence="1">
    <location>
        <begin position="28"/>
        <end position="48"/>
    </location>
</feature>
<feature type="transmembrane region" description="Helical" evidence="1">
    <location>
        <begin position="56"/>
        <end position="76"/>
    </location>
</feature>
<feature type="transmembrane region" description="Helical" evidence="1">
    <location>
        <begin position="87"/>
        <end position="107"/>
    </location>
</feature>
<feature type="transmembrane region" description="Helical" evidence="1">
    <location>
        <begin position="140"/>
        <end position="160"/>
    </location>
</feature>
<feature type="transmembrane region" description="Helical" evidence="1">
    <location>
        <begin position="170"/>
        <end position="190"/>
    </location>
</feature>
<feature type="transmembrane region" description="Helical" evidence="1">
    <location>
        <begin position="201"/>
        <end position="221"/>
    </location>
</feature>
<feature type="transmembrane region" description="Helical" evidence="1">
    <location>
        <begin position="224"/>
        <end position="244"/>
    </location>
</feature>
<feature type="transmembrane region" description="Helical" evidence="1">
    <location>
        <begin position="251"/>
        <end position="271"/>
    </location>
</feature>
<reference key="1">
    <citation type="journal article" date="1997" name="Gene">
        <title>Identification and transcriptional analysis of a Treponema pallidum operon encoding a putative ABC transport system, an iron-activated repressor protein homolog, and a glycolytic pathway enzyme homolog.</title>
        <authorList>
            <person name="Hardham J.M."/>
            <person name="Stamm L.V."/>
            <person name="Porcella S.F."/>
            <person name="Frye J.G."/>
            <person name="Barnes N.Y."/>
            <person name="Howell J.K."/>
            <person name="Mueller S.L."/>
            <person name="Radolf J.D."/>
            <person name="Weinstock G.M."/>
            <person name="Norris S.J."/>
        </authorList>
    </citation>
    <scope>NUCLEOTIDE SEQUENCE [GENOMIC DNA]</scope>
    <source>
        <strain>Nichols</strain>
    </source>
</reference>
<reference key="2">
    <citation type="journal article" date="1998" name="Science">
        <title>Complete genome sequence of Treponema pallidum, the syphilis spirochete.</title>
        <authorList>
            <person name="Fraser C.M."/>
            <person name="Norris S.J."/>
            <person name="Weinstock G.M."/>
            <person name="White O."/>
            <person name="Sutton G.G."/>
            <person name="Dodson R.J."/>
            <person name="Gwinn M.L."/>
            <person name="Hickey E.K."/>
            <person name="Clayton R.A."/>
            <person name="Ketchum K.A."/>
            <person name="Sodergren E."/>
            <person name="Hardham J.M."/>
            <person name="McLeod M.P."/>
            <person name="Salzberg S.L."/>
            <person name="Peterson J.D."/>
            <person name="Khalak H.G."/>
            <person name="Richardson D.L."/>
            <person name="Howell J.K."/>
            <person name="Chidambaram M."/>
            <person name="Utterback T.R."/>
            <person name="McDonald L.A."/>
            <person name="Artiach P."/>
            <person name="Bowman C."/>
            <person name="Cotton M.D."/>
            <person name="Fujii C."/>
            <person name="Garland S.A."/>
            <person name="Hatch B."/>
            <person name="Horst K."/>
            <person name="Roberts K.M."/>
            <person name="Sandusky M."/>
            <person name="Weidman J.F."/>
            <person name="Smith H.O."/>
            <person name="Venter J.C."/>
        </authorList>
    </citation>
    <scope>NUCLEOTIDE SEQUENCE [LARGE SCALE GENOMIC DNA]</scope>
    <source>
        <strain>Nichols</strain>
    </source>
</reference>
<dbReference type="EMBL" id="U55214">
    <property type="protein sequence ID" value="AAC45728.1"/>
    <property type="molecule type" value="Genomic_DNA"/>
</dbReference>
<dbReference type="EMBL" id="AE000520">
    <property type="protein sequence ID" value="AAC65156.1"/>
    <property type="molecule type" value="Genomic_DNA"/>
</dbReference>
<dbReference type="PIR" id="C71357">
    <property type="entry name" value="C71357"/>
</dbReference>
<dbReference type="RefSeq" id="WP_010881613.1">
    <property type="nucleotide sequence ID" value="NC_000919.1"/>
</dbReference>
<dbReference type="RefSeq" id="WP_014342310.1">
    <property type="nucleotide sequence ID" value="NC_021490.2"/>
</dbReference>
<dbReference type="SMR" id="P96119"/>
<dbReference type="STRING" id="243276.TP_0166"/>
<dbReference type="TCDB" id="3.A.1.15.8">
    <property type="family name" value="the atp-binding cassette (abc) superfamily"/>
</dbReference>
<dbReference type="EnsemblBacteria" id="AAC65156">
    <property type="protein sequence ID" value="AAC65156"/>
    <property type="gene ID" value="TP_0166"/>
</dbReference>
<dbReference type="GeneID" id="93875958"/>
<dbReference type="KEGG" id="tpa:TP_0166"/>
<dbReference type="KEGG" id="tpw:TPANIC_0166"/>
<dbReference type="eggNOG" id="COG1108">
    <property type="taxonomic scope" value="Bacteria"/>
</dbReference>
<dbReference type="HOGENOM" id="CLU_028808_4_1_12"/>
<dbReference type="OrthoDB" id="9788905at2"/>
<dbReference type="Proteomes" id="UP000000811">
    <property type="component" value="Chromosome"/>
</dbReference>
<dbReference type="GO" id="GO:0043190">
    <property type="term" value="C:ATP-binding cassette (ABC) transporter complex"/>
    <property type="evidence" value="ECO:0007669"/>
    <property type="project" value="InterPro"/>
</dbReference>
<dbReference type="GO" id="GO:0010043">
    <property type="term" value="P:response to zinc ion"/>
    <property type="evidence" value="ECO:0007669"/>
    <property type="project" value="TreeGrafter"/>
</dbReference>
<dbReference type="GO" id="GO:0055085">
    <property type="term" value="P:transmembrane transport"/>
    <property type="evidence" value="ECO:0007669"/>
    <property type="project" value="InterPro"/>
</dbReference>
<dbReference type="GO" id="GO:0006829">
    <property type="term" value="P:zinc ion transport"/>
    <property type="evidence" value="ECO:0007669"/>
    <property type="project" value="UniProtKB-KW"/>
</dbReference>
<dbReference type="CDD" id="cd06550">
    <property type="entry name" value="TM_ABC_iron-siderophores_like"/>
    <property type="match status" value="1"/>
</dbReference>
<dbReference type="Gene3D" id="1.10.3470.10">
    <property type="entry name" value="ABC transporter involved in vitamin B12 uptake, BtuC"/>
    <property type="match status" value="1"/>
</dbReference>
<dbReference type="InterPro" id="IPR037294">
    <property type="entry name" value="ABC_BtuC-like"/>
</dbReference>
<dbReference type="InterPro" id="IPR001626">
    <property type="entry name" value="ABC_TroCD"/>
</dbReference>
<dbReference type="PANTHER" id="PTHR30477">
    <property type="entry name" value="ABC-TRANSPORTER METAL-BINDING PROTEIN"/>
    <property type="match status" value="1"/>
</dbReference>
<dbReference type="PANTHER" id="PTHR30477:SF8">
    <property type="entry name" value="METAL TRANSPORT SYSTEM MEMBRANE PROTEIN CT_070-RELATED"/>
    <property type="match status" value="1"/>
</dbReference>
<dbReference type="Pfam" id="PF00950">
    <property type="entry name" value="ABC-3"/>
    <property type="match status" value="1"/>
</dbReference>
<dbReference type="SUPFAM" id="SSF81345">
    <property type="entry name" value="ABC transporter involved in vitamin B12 uptake, BtuC"/>
    <property type="match status" value="1"/>
</dbReference>
<sequence>MTMEVVLIAVVVSVACALCGVFLVLRRISLMSDAISHSVILGIVLGYFLSRTLSSFVPFVGAVIAGICSVICAELLQKTGMVKSDAAVGLVFPAMFGLGVILVSLYAGNVHLDTDAVLLGEIGLAPLDRVSFFAWSLPRSLVQMGSVLCGLLLLLALFFKELKISTFDPVLATSLGFSPTLINYGLMLAVSITCVGAFDSVGAVLVIALMITPPAAALLLTDNLLLMLVLASLLASCASISGLFLAVKIDGSIAGAMATMAGVLFALVYLFSPKHGVVRRCLVMRALKLDLDVVTLAVHLATHRYTVERSVECAEVHLTEHVSWSARRAARVVRTALRRGMVERHGALLLLTAQGVSLAQARLDVSV</sequence>
<organism>
    <name type="scientific">Treponema pallidum (strain Nichols)</name>
    <dbReference type="NCBI Taxonomy" id="243276"/>
    <lineage>
        <taxon>Bacteria</taxon>
        <taxon>Pseudomonadati</taxon>
        <taxon>Spirochaetota</taxon>
        <taxon>Spirochaetia</taxon>
        <taxon>Spirochaetales</taxon>
        <taxon>Treponemataceae</taxon>
        <taxon>Treponema</taxon>
    </lineage>
</organism>
<name>TROD_TREPA</name>
<evidence type="ECO:0000255" key="1"/>
<evidence type="ECO:0000305" key="2"/>
<gene>
    <name type="primary">troD</name>
    <name type="ordered locus">TP_0166</name>
</gene>
<comment type="function">
    <text>Part of an ATP-driven transport system TroABCD for zinc.</text>
</comment>
<comment type="subcellular location">
    <subcellularLocation>
        <location>Cell membrane</location>
        <topology>Multi-pass membrane protein</topology>
    </subcellularLocation>
</comment>
<comment type="similarity">
    <text evidence="2">Belongs to the ABC-3 integral membrane protein family.</text>
</comment>
<protein>
    <recommendedName>
        <fullName>Zinc transport system membrane protein TroD</fullName>
    </recommendedName>
</protein>